<comment type="function">
    <text evidence="1 4">Plays an essential role in the maturation of presomitic mesoderm cells by individual attenuation of both FGF and WNT signaling.</text>
</comment>
<comment type="subcellular location">
    <subcellularLocation>
        <location evidence="2">Endoplasmic reticulum membrane</location>
        <topology evidence="3">Single-pass type I membrane protein</topology>
    </subcellularLocation>
</comment>
<comment type="developmental stage">
    <text evidence="4">At 8.5 dpc, expressed in the foregut. At 9.5 dpc, expressed in the ventral mesencephalon and rhombencephalon. At 12.5 dpc, expressed in ventral midbrain, myotome and kidney.</text>
</comment>
<comment type="disruption phenotype">
    <text evidence="4">Mutants exhibited no phenotype in either head development or somitogenesis.</text>
</comment>
<comment type="similarity">
    <text evidence="5">Belongs to the shisa family.</text>
</comment>
<sequence>MGALLAFCLLVGLLRWGPAGAQQPGEYCHGWVDAQGNYHEGFQCPEDFDTQDATICCGSCALRYCCAAADARLEQGGCTNDRGELEHPGITAQPVYVPFLIVGSIFIAFIILGSLVAIYCCTCLRPKEPSQQPIRFSLRSYQTETLPMILTSTSLRAASRQSSTATSSSSTGGSVRRFSFARAEPSCLVPSSPPPYTTGHTIHLTQPSGFLVSPQYFAYPLQQEPPLPGKSCPDFSSS</sequence>
<name>SHSA3_MOUSE</name>
<keyword id="KW-0002">3D-structure</keyword>
<keyword id="KW-0217">Developmental protein</keyword>
<keyword id="KW-0256">Endoplasmic reticulum</keyword>
<keyword id="KW-0472">Membrane</keyword>
<keyword id="KW-1185">Reference proteome</keyword>
<keyword id="KW-0732">Signal</keyword>
<keyword id="KW-0812">Transmembrane</keyword>
<keyword id="KW-1133">Transmembrane helix</keyword>
<evidence type="ECO:0000250" key="1"/>
<evidence type="ECO:0000250" key="2">
    <source>
        <dbReference type="UniProtKB" id="Q7T0Z7"/>
    </source>
</evidence>
<evidence type="ECO:0000255" key="3"/>
<evidence type="ECO:0000269" key="4">
    <source>
    </source>
</evidence>
<evidence type="ECO:0000305" key="5"/>
<evidence type="ECO:0007829" key="6">
    <source>
        <dbReference type="PDB" id="5M0W"/>
    </source>
</evidence>
<reference key="1">
    <citation type="journal article" date="2005" name="Science">
        <title>The transcriptional landscape of the mammalian genome.</title>
        <authorList>
            <person name="Carninci P."/>
            <person name="Kasukawa T."/>
            <person name="Katayama S."/>
            <person name="Gough J."/>
            <person name="Frith M.C."/>
            <person name="Maeda N."/>
            <person name="Oyama R."/>
            <person name="Ravasi T."/>
            <person name="Lenhard B."/>
            <person name="Wells C."/>
            <person name="Kodzius R."/>
            <person name="Shimokawa K."/>
            <person name="Bajic V.B."/>
            <person name="Brenner S.E."/>
            <person name="Batalov S."/>
            <person name="Forrest A.R."/>
            <person name="Zavolan M."/>
            <person name="Davis M.J."/>
            <person name="Wilming L.G."/>
            <person name="Aidinis V."/>
            <person name="Allen J.E."/>
            <person name="Ambesi-Impiombato A."/>
            <person name="Apweiler R."/>
            <person name="Aturaliya R.N."/>
            <person name="Bailey T.L."/>
            <person name="Bansal M."/>
            <person name="Baxter L."/>
            <person name="Beisel K.W."/>
            <person name="Bersano T."/>
            <person name="Bono H."/>
            <person name="Chalk A.M."/>
            <person name="Chiu K.P."/>
            <person name="Choudhary V."/>
            <person name="Christoffels A."/>
            <person name="Clutterbuck D.R."/>
            <person name="Crowe M.L."/>
            <person name="Dalla E."/>
            <person name="Dalrymple B.P."/>
            <person name="de Bono B."/>
            <person name="Della Gatta G."/>
            <person name="di Bernardo D."/>
            <person name="Down T."/>
            <person name="Engstrom P."/>
            <person name="Fagiolini M."/>
            <person name="Faulkner G."/>
            <person name="Fletcher C.F."/>
            <person name="Fukushima T."/>
            <person name="Furuno M."/>
            <person name="Futaki S."/>
            <person name="Gariboldi M."/>
            <person name="Georgii-Hemming P."/>
            <person name="Gingeras T.R."/>
            <person name="Gojobori T."/>
            <person name="Green R.E."/>
            <person name="Gustincich S."/>
            <person name="Harbers M."/>
            <person name="Hayashi Y."/>
            <person name="Hensch T.K."/>
            <person name="Hirokawa N."/>
            <person name="Hill D."/>
            <person name="Huminiecki L."/>
            <person name="Iacono M."/>
            <person name="Ikeo K."/>
            <person name="Iwama A."/>
            <person name="Ishikawa T."/>
            <person name="Jakt M."/>
            <person name="Kanapin A."/>
            <person name="Katoh M."/>
            <person name="Kawasawa Y."/>
            <person name="Kelso J."/>
            <person name="Kitamura H."/>
            <person name="Kitano H."/>
            <person name="Kollias G."/>
            <person name="Krishnan S.P."/>
            <person name="Kruger A."/>
            <person name="Kummerfeld S.K."/>
            <person name="Kurochkin I.V."/>
            <person name="Lareau L.F."/>
            <person name="Lazarevic D."/>
            <person name="Lipovich L."/>
            <person name="Liu J."/>
            <person name="Liuni S."/>
            <person name="McWilliam S."/>
            <person name="Madan Babu M."/>
            <person name="Madera M."/>
            <person name="Marchionni L."/>
            <person name="Matsuda H."/>
            <person name="Matsuzawa S."/>
            <person name="Miki H."/>
            <person name="Mignone F."/>
            <person name="Miyake S."/>
            <person name="Morris K."/>
            <person name="Mottagui-Tabar S."/>
            <person name="Mulder N."/>
            <person name="Nakano N."/>
            <person name="Nakauchi H."/>
            <person name="Ng P."/>
            <person name="Nilsson R."/>
            <person name="Nishiguchi S."/>
            <person name="Nishikawa S."/>
            <person name="Nori F."/>
            <person name="Ohara O."/>
            <person name="Okazaki Y."/>
            <person name="Orlando V."/>
            <person name="Pang K.C."/>
            <person name="Pavan W.J."/>
            <person name="Pavesi G."/>
            <person name="Pesole G."/>
            <person name="Petrovsky N."/>
            <person name="Piazza S."/>
            <person name="Reed J."/>
            <person name="Reid J.F."/>
            <person name="Ring B.Z."/>
            <person name="Ringwald M."/>
            <person name="Rost B."/>
            <person name="Ruan Y."/>
            <person name="Salzberg S.L."/>
            <person name="Sandelin A."/>
            <person name="Schneider C."/>
            <person name="Schoenbach C."/>
            <person name="Sekiguchi K."/>
            <person name="Semple C.A."/>
            <person name="Seno S."/>
            <person name="Sessa L."/>
            <person name="Sheng Y."/>
            <person name="Shibata Y."/>
            <person name="Shimada H."/>
            <person name="Shimada K."/>
            <person name="Silva D."/>
            <person name="Sinclair B."/>
            <person name="Sperling S."/>
            <person name="Stupka E."/>
            <person name="Sugiura K."/>
            <person name="Sultana R."/>
            <person name="Takenaka Y."/>
            <person name="Taki K."/>
            <person name="Tammoja K."/>
            <person name="Tan S.L."/>
            <person name="Tang S."/>
            <person name="Taylor M.S."/>
            <person name="Tegner J."/>
            <person name="Teichmann S.A."/>
            <person name="Ueda H.R."/>
            <person name="van Nimwegen E."/>
            <person name="Verardo R."/>
            <person name="Wei C.L."/>
            <person name="Yagi K."/>
            <person name="Yamanishi H."/>
            <person name="Zabarovsky E."/>
            <person name="Zhu S."/>
            <person name="Zimmer A."/>
            <person name="Hide W."/>
            <person name="Bult C."/>
            <person name="Grimmond S.M."/>
            <person name="Teasdale R.D."/>
            <person name="Liu E.T."/>
            <person name="Brusic V."/>
            <person name="Quackenbush J."/>
            <person name="Wahlestedt C."/>
            <person name="Mattick J.S."/>
            <person name="Hume D.A."/>
            <person name="Kai C."/>
            <person name="Sasaki D."/>
            <person name="Tomaru Y."/>
            <person name="Fukuda S."/>
            <person name="Kanamori-Katayama M."/>
            <person name="Suzuki M."/>
            <person name="Aoki J."/>
            <person name="Arakawa T."/>
            <person name="Iida J."/>
            <person name="Imamura K."/>
            <person name="Itoh M."/>
            <person name="Kato T."/>
            <person name="Kawaji H."/>
            <person name="Kawagashira N."/>
            <person name="Kawashima T."/>
            <person name="Kojima M."/>
            <person name="Kondo S."/>
            <person name="Konno H."/>
            <person name="Nakano K."/>
            <person name="Ninomiya N."/>
            <person name="Nishio T."/>
            <person name="Okada M."/>
            <person name="Plessy C."/>
            <person name="Shibata K."/>
            <person name="Shiraki T."/>
            <person name="Suzuki S."/>
            <person name="Tagami M."/>
            <person name="Waki K."/>
            <person name="Watahiki A."/>
            <person name="Okamura-Oho Y."/>
            <person name="Suzuki H."/>
            <person name="Kawai J."/>
            <person name="Hayashizaki Y."/>
        </authorList>
    </citation>
    <scope>NUCLEOTIDE SEQUENCE [LARGE SCALE MRNA]</scope>
    <source>
        <strain>C57BL/6J</strain>
        <tissue>Oviduct</tissue>
        <tissue>Testis</tissue>
    </source>
</reference>
<reference key="2">
    <citation type="journal article" date="2004" name="Genome Res.">
        <title>The status, quality, and expansion of the NIH full-length cDNA project: the Mammalian Gene Collection (MGC).</title>
        <authorList>
            <consortium name="The MGC Project Team"/>
        </authorList>
    </citation>
    <scope>NUCLEOTIDE SEQUENCE [LARGE SCALE MRNA]</scope>
    <source>
        <tissue>Thymus</tissue>
    </source>
</reference>
<reference key="3">
    <citation type="journal article" date="2007" name="Dev. Biol.">
        <title>Mouse homologues of Shisa antagonistic to Wnt and Fgf signalings.</title>
        <authorList>
            <person name="Furushima K."/>
            <person name="Yamamoto A."/>
            <person name="Nagano T."/>
            <person name="Shibata M."/>
            <person name="Miyachi H."/>
            <person name="Abe T."/>
            <person name="Ohshima N."/>
            <person name="Kiyonari H."/>
            <person name="Aizawa S."/>
        </authorList>
    </citation>
    <scope>FUNCTION</scope>
    <scope>DEVELOPMENTAL STAGE</scope>
    <scope>DISRUPTION PHENOTYPE</scope>
</reference>
<organism>
    <name type="scientific">Mus musculus</name>
    <name type="common">Mouse</name>
    <dbReference type="NCBI Taxonomy" id="10090"/>
    <lineage>
        <taxon>Eukaryota</taxon>
        <taxon>Metazoa</taxon>
        <taxon>Chordata</taxon>
        <taxon>Craniata</taxon>
        <taxon>Vertebrata</taxon>
        <taxon>Euteleostomi</taxon>
        <taxon>Mammalia</taxon>
        <taxon>Eutheria</taxon>
        <taxon>Euarchontoglires</taxon>
        <taxon>Glires</taxon>
        <taxon>Rodentia</taxon>
        <taxon>Myomorpha</taxon>
        <taxon>Muroidea</taxon>
        <taxon>Muridae</taxon>
        <taxon>Murinae</taxon>
        <taxon>Mus</taxon>
        <taxon>Mus</taxon>
    </lineage>
</organism>
<feature type="signal peptide" evidence="3">
    <location>
        <begin position="1"/>
        <end position="21"/>
    </location>
</feature>
<feature type="chain" id="PRO_0000330026" description="Protein shisa-3 homolog">
    <location>
        <begin position="22"/>
        <end position="238"/>
    </location>
</feature>
<feature type="topological domain" description="Lumenal" evidence="5">
    <location>
        <begin position="22"/>
        <end position="98"/>
    </location>
</feature>
<feature type="transmembrane region" description="Helical" evidence="3">
    <location>
        <begin position="99"/>
        <end position="119"/>
    </location>
</feature>
<feature type="topological domain" description="Cytoplasmic" evidence="5">
    <location>
        <begin position="120"/>
        <end position="238"/>
    </location>
</feature>
<feature type="sequence conflict" description="In Ref. 1; BAC36585." evidence="5" ref="1">
    <original>T</original>
    <variation>S</variation>
    <location>
        <position position="79"/>
    </location>
</feature>
<feature type="strand" evidence="6">
    <location>
        <begin position="42"/>
        <end position="45"/>
    </location>
</feature>
<feature type="strand" evidence="6">
    <location>
        <begin position="55"/>
        <end position="59"/>
    </location>
</feature>
<feature type="strand" evidence="6">
    <location>
        <begin position="62"/>
        <end position="67"/>
    </location>
</feature>
<feature type="helix" evidence="6">
    <location>
        <begin position="69"/>
        <end position="71"/>
    </location>
</feature>
<feature type="helix" evidence="6">
    <location>
        <begin position="75"/>
        <end position="77"/>
    </location>
</feature>
<feature type="strand" evidence="6">
    <location>
        <begin position="79"/>
        <end position="82"/>
    </location>
</feature>
<proteinExistence type="evidence at protein level"/>
<protein>
    <recommendedName>
        <fullName>Protein shisa-3 homolog</fullName>
    </recommendedName>
</protein>
<accession>Q3UPR0</accession>
<accession>Q8C5V3</accession>
<dbReference type="EMBL" id="AK077061">
    <property type="protein sequence ID" value="BAC36585.1"/>
    <property type="molecule type" value="mRNA"/>
</dbReference>
<dbReference type="EMBL" id="AK143290">
    <property type="protein sequence ID" value="BAE25335.1"/>
    <property type="molecule type" value="mRNA"/>
</dbReference>
<dbReference type="EMBL" id="BC120534">
    <property type="protein sequence ID" value="AAI20535.1"/>
    <property type="molecule type" value="mRNA"/>
</dbReference>
<dbReference type="EMBL" id="BC120536">
    <property type="protein sequence ID" value="AAI20537.1"/>
    <property type="molecule type" value="mRNA"/>
</dbReference>
<dbReference type="CCDS" id="CCDS19318.1"/>
<dbReference type="RefSeq" id="NP_001028587.1">
    <property type="nucleotide sequence ID" value="NM_001033415.3"/>
</dbReference>
<dbReference type="PDB" id="5M0W">
    <property type="method" value="X-ray"/>
    <property type="resolution" value="1.39 A"/>
    <property type="chains" value="A=22-95"/>
</dbReference>
<dbReference type="PDBsum" id="5M0W"/>
<dbReference type="SMR" id="Q3UPR0"/>
<dbReference type="FunCoup" id="Q3UPR0">
    <property type="interactions" value="19"/>
</dbReference>
<dbReference type="STRING" id="10090.ENSMUSP00000084494"/>
<dbReference type="PhosphoSitePlus" id="Q3UPR0"/>
<dbReference type="PaxDb" id="10090-ENSMUSP00000084494"/>
<dbReference type="PeptideAtlas" id="Q3UPR0"/>
<dbReference type="ProteomicsDB" id="255423"/>
<dbReference type="Antibodypedia" id="56214">
    <property type="antibodies" value="65 antibodies from 21 providers"/>
</dbReference>
<dbReference type="Ensembl" id="ENSMUST00000087241.7">
    <property type="protein sequence ID" value="ENSMUSP00000084494.6"/>
    <property type="gene ID" value="ENSMUSG00000050010.9"/>
</dbReference>
<dbReference type="GeneID" id="330096"/>
<dbReference type="KEGG" id="mmu:330096"/>
<dbReference type="UCSC" id="uc008xpy.2">
    <property type="organism name" value="mouse"/>
</dbReference>
<dbReference type="AGR" id="MGI:3041225"/>
<dbReference type="CTD" id="152573"/>
<dbReference type="MGI" id="MGI:3041225">
    <property type="gene designation" value="Shisa3"/>
</dbReference>
<dbReference type="VEuPathDB" id="HostDB:ENSMUSG00000050010"/>
<dbReference type="eggNOG" id="ENOG502RY5T">
    <property type="taxonomic scope" value="Eukaryota"/>
</dbReference>
<dbReference type="GeneTree" id="ENSGT00940000161360"/>
<dbReference type="HOGENOM" id="CLU_085916_1_0_1"/>
<dbReference type="InParanoid" id="Q3UPR0"/>
<dbReference type="OMA" id="RPKQTLQ"/>
<dbReference type="OrthoDB" id="10025410at2759"/>
<dbReference type="PhylomeDB" id="Q3UPR0"/>
<dbReference type="TreeFam" id="TF330800"/>
<dbReference type="BioGRID-ORCS" id="330096">
    <property type="hits" value="1 hit in 76 CRISPR screens"/>
</dbReference>
<dbReference type="PRO" id="PR:Q3UPR0"/>
<dbReference type="Proteomes" id="UP000000589">
    <property type="component" value="Chromosome 5"/>
</dbReference>
<dbReference type="RNAct" id="Q3UPR0">
    <property type="molecule type" value="protein"/>
</dbReference>
<dbReference type="Bgee" id="ENSMUSG00000050010">
    <property type="expression patterns" value="Expressed in lumbar dorsal root ganglion and 124 other cell types or tissues"/>
</dbReference>
<dbReference type="ExpressionAtlas" id="Q3UPR0">
    <property type="expression patterns" value="baseline and differential"/>
</dbReference>
<dbReference type="GO" id="GO:0005789">
    <property type="term" value="C:endoplasmic reticulum membrane"/>
    <property type="evidence" value="ECO:0007669"/>
    <property type="project" value="UniProtKB-SubCell"/>
</dbReference>
<dbReference type="GO" id="GO:0090090">
    <property type="term" value="P:negative regulation of canonical Wnt signaling pathway"/>
    <property type="evidence" value="ECO:0000314"/>
    <property type="project" value="MGI"/>
</dbReference>
<dbReference type="InterPro" id="IPR026910">
    <property type="entry name" value="Shisa"/>
</dbReference>
<dbReference type="InterPro" id="IPR053891">
    <property type="entry name" value="Shisa_N"/>
</dbReference>
<dbReference type="PANTHER" id="PTHR31395:SF4">
    <property type="entry name" value="PROTEIN SHISA-3 HOMOLOG"/>
    <property type="match status" value="1"/>
</dbReference>
<dbReference type="PANTHER" id="PTHR31395">
    <property type="entry name" value="SHISA"/>
    <property type="match status" value="1"/>
</dbReference>
<dbReference type="Pfam" id="PF13908">
    <property type="entry name" value="Shisa_N"/>
    <property type="match status" value="1"/>
</dbReference>
<gene>
    <name type="primary">Shisa3</name>
</gene>